<name>GPX5_CANLF</name>
<feature type="signal peptide" evidence="2">
    <location>
        <begin position="1"/>
        <end position="21"/>
    </location>
</feature>
<feature type="chain" id="PRO_0000013075" description="Epididymal secretory glutathione peroxidase">
    <location>
        <begin position="22"/>
        <end position="221"/>
    </location>
</feature>
<feature type="active site" evidence="1">
    <location>
        <position position="73"/>
    </location>
</feature>
<proteinExistence type="evidence at transcript level"/>
<comment type="function">
    <text>Protects cells and enzymes from oxidative damage, by catalyzing the reduction of hydrogen peroxide, lipid peroxides and organic hydroperoxide, by glutathione. May constitute a glutathione peroxidase-like protective system against peroxide damage in sperm membrane lipids.</text>
</comment>
<comment type="catalytic activity">
    <reaction>
        <text>2 glutathione + H2O2 = glutathione disulfide + 2 H2O</text>
        <dbReference type="Rhea" id="RHEA:16833"/>
        <dbReference type="ChEBI" id="CHEBI:15377"/>
        <dbReference type="ChEBI" id="CHEBI:16240"/>
        <dbReference type="ChEBI" id="CHEBI:57925"/>
        <dbReference type="ChEBI" id="CHEBI:58297"/>
        <dbReference type="EC" id="1.11.1.9"/>
    </reaction>
</comment>
<comment type="subcellular location">
    <subcellularLocation>
        <location>Secreted</location>
    </subcellularLocation>
</comment>
<comment type="tissue specificity">
    <text>Epididymis.</text>
</comment>
<comment type="similarity">
    <text evidence="3">Belongs to the glutathione peroxidase family.</text>
</comment>
<organism>
    <name type="scientific">Canis lupus familiaris</name>
    <name type="common">Dog</name>
    <name type="synonym">Canis familiaris</name>
    <dbReference type="NCBI Taxonomy" id="9615"/>
    <lineage>
        <taxon>Eukaryota</taxon>
        <taxon>Metazoa</taxon>
        <taxon>Chordata</taxon>
        <taxon>Craniata</taxon>
        <taxon>Vertebrata</taxon>
        <taxon>Euteleostomi</taxon>
        <taxon>Mammalia</taxon>
        <taxon>Eutheria</taxon>
        <taxon>Laurasiatheria</taxon>
        <taxon>Carnivora</taxon>
        <taxon>Caniformia</taxon>
        <taxon>Canidae</taxon>
        <taxon>Canis</taxon>
    </lineage>
</organism>
<accession>O46607</accession>
<evidence type="ECO:0000250" key="1"/>
<evidence type="ECO:0000255" key="2"/>
<evidence type="ECO:0000305" key="3"/>
<keyword id="KW-0560">Oxidoreductase</keyword>
<keyword id="KW-0575">Peroxidase</keyword>
<keyword id="KW-1185">Reference proteome</keyword>
<keyword id="KW-0964">Secreted</keyword>
<keyword id="KW-0732">Signal</keyword>
<dbReference type="EC" id="1.11.1.9"/>
<dbReference type="EMBL" id="AF045185">
    <property type="protein sequence ID" value="AAC02550.1"/>
    <property type="molecule type" value="mRNA"/>
</dbReference>
<dbReference type="RefSeq" id="NP_001003213.1">
    <property type="nucleotide sequence ID" value="NM_001003213.1"/>
</dbReference>
<dbReference type="SMR" id="O46607"/>
<dbReference type="FunCoup" id="O46607">
    <property type="interactions" value="24"/>
</dbReference>
<dbReference type="STRING" id="9615.ENSCAFP00000034092"/>
<dbReference type="PeroxiBase" id="3737">
    <property type="entry name" value="CfaGPx05"/>
</dbReference>
<dbReference type="PaxDb" id="9612-ENSCAFP00000017573"/>
<dbReference type="GeneID" id="403877"/>
<dbReference type="KEGG" id="cfa:403877"/>
<dbReference type="CTD" id="2880"/>
<dbReference type="eggNOG" id="KOG1651">
    <property type="taxonomic scope" value="Eukaryota"/>
</dbReference>
<dbReference type="InParanoid" id="O46607"/>
<dbReference type="OrthoDB" id="446890at2759"/>
<dbReference type="Proteomes" id="UP000002254">
    <property type="component" value="Unplaced"/>
</dbReference>
<dbReference type="Proteomes" id="UP000694429">
    <property type="component" value="Unplaced"/>
</dbReference>
<dbReference type="Proteomes" id="UP000694542">
    <property type="component" value="Unplaced"/>
</dbReference>
<dbReference type="Proteomes" id="UP000805418">
    <property type="component" value="Unplaced"/>
</dbReference>
<dbReference type="GO" id="GO:0005576">
    <property type="term" value="C:extracellular region"/>
    <property type="evidence" value="ECO:0007669"/>
    <property type="project" value="UniProtKB-SubCell"/>
</dbReference>
<dbReference type="GO" id="GO:0004602">
    <property type="term" value="F:glutathione peroxidase activity"/>
    <property type="evidence" value="ECO:0000318"/>
    <property type="project" value="GO_Central"/>
</dbReference>
<dbReference type="GO" id="GO:0006979">
    <property type="term" value="P:response to oxidative stress"/>
    <property type="evidence" value="ECO:0007669"/>
    <property type="project" value="InterPro"/>
</dbReference>
<dbReference type="CDD" id="cd00340">
    <property type="entry name" value="GSH_Peroxidase"/>
    <property type="match status" value="1"/>
</dbReference>
<dbReference type="FunFam" id="3.40.30.10:FF:000112">
    <property type="entry name" value="Glutathione peroxidase"/>
    <property type="match status" value="1"/>
</dbReference>
<dbReference type="Gene3D" id="3.40.30.10">
    <property type="entry name" value="Glutaredoxin"/>
    <property type="match status" value="1"/>
</dbReference>
<dbReference type="InterPro" id="IPR000889">
    <property type="entry name" value="Glutathione_peroxidase"/>
</dbReference>
<dbReference type="InterPro" id="IPR029759">
    <property type="entry name" value="GPX_AS"/>
</dbReference>
<dbReference type="InterPro" id="IPR029760">
    <property type="entry name" value="GPX_CS"/>
</dbReference>
<dbReference type="InterPro" id="IPR036249">
    <property type="entry name" value="Thioredoxin-like_sf"/>
</dbReference>
<dbReference type="PANTHER" id="PTHR11592:SF127">
    <property type="entry name" value="EPIDIDYMAL SECRETORY GLUTATHIONE PEROXIDASE"/>
    <property type="match status" value="1"/>
</dbReference>
<dbReference type="PANTHER" id="PTHR11592">
    <property type="entry name" value="GLUTATHIONE PEROXIDASE"/>
    <property type="match status" value="1"/>
</dbReference>
<dbReference type="Pfam" id="PF00255">
    <property type="entry name" value="GSHPx"/>
    <property type="match status" value="1"/>
</dbReference>
<dbReference type="PIRSF" id="PIRSF000303">
    <property type="entry name" value="Glutathion_perox"/>
    <property type="match status" value="1"/>
</dbReference>
<dbReference type="PRINTS" id="PR01011">
    <property type="entry name" value="GLUTPROXDASE"/>
</dbReference>
<dbReference type="SUPFAM" id="SSF52833">
    <property type="entry name" value="Thioredoxin-like"/>
    <property type="match status" value="1"/>
</dbReference>
<dbReference type="PROSITE" id="PS00460">
    <property type="entry name" value="GLUTATHIONE_PEROXID_1"/>
    <property type="match status" value="1"/>
</dbReference>
<dbReference type="PROSITE" id="PS00763">
    <property type="entry name" value="GLUTATHIONE_PEROXID_2"/>
    <property type="match status" value="1"/>
</dbReference>
<dbReference type="PROSITE" id="PS51355">
    <property type="entry name" value="GLUTATHIONE_PEROXID_3"/>
    <property type="match status" value="1"/>
</dbReference>
<reference key="1">
    <citation type="journal article" date="1998" name="J. Reprod. Fertil.">
        <title>Dog epididymis-specific mRNA encoding secretory glutathione peroxidase-like protein.</title>
        <authorList>
            <person name="Beiglboeck A."/>
            <person name="Pera I."/>
            <person name="Ellerbrock K."/>
            <person name="Kirchhoff C."/>
        </authorList>
    </citation>
    <scope>NUCLEOTIDE SEQUENCE [MRNA]</scope>
    <source>
        <tissue>Epididymis</tissue>
    </source>
</reference>
<protein>
    <recommendedName>
        <fullName>Epididymal secretory glutathione peroxidase</fullName>
        <ecNumber>1.11.1.9</ecNumber>
    </recommendedName>
    <alternativeName>
        <fullName>Epididymis-specific glutathione peroxidase-like protein</fullName>
        <shortName>EGLP</shortName>
    </alternativeName>
    <alternativeName>
        <fullName>Glutathione peroxidase 5</fullName>
        <shortName>GPx-5</shortName>
        <shortName>GSHPx-5</shortName>
    </alternativeName>
</protein>
<gene>
    <name type="primary">GPX5</name>
</gene>
<sequence>MTAWLGASYVLPILLVSFVQTNAKPEKTKMDCYKDVKGTIYEYEALTLNGNERIQFKQYPRKHVLFVNVATYCGLTAQYPELNSLQEELKPLGLVVLGFPCNQFGKQGPGENSEILPGLKYVRPGRGYVPNFQLFEKGDVNGEKEQKVFTFLKLSCPHPSEVLGSFRHISWDPVKVHDIRWNFEKFLVGPDGVPVLRWFHRTPISTVKEDILVYLKQLKMK</sequence>